<gene>
    <name evidence="1" type="primary">rnhB</name>
    <name type="ordered locus">YPN_2942</name>
    <name type="ORF">YP516_3332</name>
</gene>
<feature type="chain" id="PRO_1000031223" description="Ribonuclease HII">
    <location>
        <begin position="1"/>
        <end position="198"/>
    </location>
</feature>
<feature type="domain" description="RNase H type-2" evidence="2">
    <location>
        <begin position="11"/>
        <end position="198"/>
    </location>
</feature>
<feature type="binding site" evidence="1">
    <location>
        <position position="17"/>
    </location>
    <ligand>
        <name>a divalent metal cation</name>
        <dbReference type="ChEBI" id="CHEBI:60240"/>
    </ligand>
</feature>
<feature type="binding site" evidence="1">
    <location>
        <position position="18"/>
    </location>
    <ligand>
        <name>a divalent metal cation</name>
        <dbReference type="ChEBI" id="CHEBI:60240"/>
    </ligand>
</feature>
<feature type="binding site" evidence="1">
    <location>
        <position position="109"/>
    </location>
    <ligand>
        <name>a divalent metal cation</name>
        <dbReference type="ChEBI" id="CHEBI:60240"/>
    </ligand>
</feature>
<name>RNH2_YERPN</name>
<keyword id="KW-0963">Cytoplasm</keyword>
<keyword id="KW-0255">Endonuclease</keyword>
<keyword id="KW-0378">Hydrolase</keyword>
<keyword id="KW-0464">Manganese</keyword>
<keyword id="KW-0479">Metal-binding</keyword>
<keyword id="KW-0540">Nuclease</keyword>
<evidence type="ECO:0000255" key="1">
    <source>
        <dbReference type="HAMAP-Rule" id="MF_00052"/>
    </source>
</evidence>
<evidence type="ECO:0000255" key="2">
    <source>
        <dbReference type="PROSITE-ProRule" id="PRU01319"/>
    </source>
</evidence>
<proteinExistence type="inferred from homology"/>
<organism>
    <name type="scientific">Yersinia pestis bv. Antiqua (strain Nepal516)</name>
    <dbReference type="NCBI Taxonomy" id="377628"/>
    <lineage>
        <taxon>Bacteria</taxon>
        <taxon>Pseudomonadati</taxon>
        <taxon>Pseudomonadota</taxon>
        <taxon>Gammaproteobacteria</taxon>
        <taxon>Enterobacterales</taxon>
        <taxon>Yersiniaceae</taxon>
        <taxon>Yersinia</taxon>
    </lineage>
</organism>
<dbReference type="EC" id="3.1.26.4" evidence="1"/>
<dbReference type="EMBL" id="CP000305">
    <property type="protein sequence ID" value="ABG19269.1"/>
    <property type="molecule type" value="Genomic_DNA"/>
</dbReference>
<dbReference type="EMBL" id="ACNQ01000017">
    <property type="protein sequence ID" value="EEO75418.1"/>
    <property type="molecule type" value="Genomic_DNA"/>
</dbReference>
<dbReference type="RefSeq" id="WP_002212145.1">
    <property type="nucleotide sequence ID" value="NZ_ACNQ01000017.1"/>
</dbReference>
<dbReference type="SMR" id="Q1CFG1"/>
<dbReference type="GeneID" id="57977503"/>
<dbReference type="KEGG" id="ypn:YPN_2942"/>
<dbReference type="HOGENOM" id="CLU_036532_3_2_6"/>
<dbReference type="Proteomes" id="UP000008936">
    <property type="component" value="Chromosome"/>
</dbReference>
<dbReference type="GO" id="GO:0005737">
    <property type="term" value="C:cytoplasm"/>
    <property type="evidence" value="ECO:0007669"/>
    <property type="project" value="UniProtKB-SubCell"/>
</dbReference>
<dbReference type="GO" id="GO:0032299">
    <property type="term" value="C:ribonuclease H2 complex"/>
    <property type="evidence" value="ECO:0007669"/>
    <property type="project" value="TreeGrafter"/>
</dbReference>
<dbReference type="GO" id="GO:0030145">
    <property type="term" value="F:manganese ion binding"/>
    <property type="evidence" value="ECO:0007669"/>
    <property type="project" value="UniProtKB-UniRule"/>
</dbReference>
<dbReference type="GO" id="GO:0003723">
    <property type="term" value="F:RNA binding"/>
    <property type="evidence" value="ECO:0007669"/>
    <property type="project" value="InterPro"/>
</dbReference>
<dbReference type="GO" id="GO:0004523">
    <property type="term" value="F:RNA-DNA hybrid ribonuclease activity"/>
    <property type="evidence" value="ECO:0007669"/>
    <property type="project" value="UniProtKB-UniRule"/>
</dbReference>
<dbReference type="GO" id="GO:0043137">
    <property type="term" value="P:DNA replication, removal of RNA primer"/>
    <property type="evidence" value="ECO:0007669"/>
    <property type="project" value="TreeGrafter"/>
</dbReference>
<dbReference type="GO" id="GO:0006298">
    <property type="term" value="P:mismatch repair"/>
    <property type="evidence" value="ECO:0007669"/>
    <property type="project" value="TreeGrafter"/>
</dbReference>
<dbReference type="CDD" id="cd07182">
    <property type="entry name" value="RNase_HII_bacteria_HII_like"/>
    <property type="match status" value="1"/>
</dbReference>
<dbReference type="FunFam" id="3.30.420.10:FF:000006">
    <property type="entry name" value="Ribonuclease HII"/>
    <property type="match status" value="1"/>
</dbReference>
<dbReference type="Gene3D" id="3.30.420.10">
    <property type="entry name" value="Ribonuclease H-like superfamily/Ribonuclease H"/>
    <property type="match status" value="1"/>
</dbReference>
<dbReference type="HAMAP" id="MF_00052_B">
    <property type="entry name" value="RNase_HII_B"/>
    <property type="match status" value="1"/>
</dbReference>
<dbReference type="InterPro" id="IPR022898">
    <property type="entry name" value="RNase_HII"/>
</dbReference>
<dbReference type="InterPro" id="IPR001352">
    <property type="entry name" value="RNase_HII/HIII"/>
</dbReference>
<dbReference type="InterPro" id="IPR024567">
    <property type="entry name" value="RNase_HII/HIII_dom"/>
</dbReference>
<dbReference type="InterPro" id="IPR012337">
    <property type="entry name" value="RNaseH-like_sf"/>
</dbReference>
<dbReference type="InterPro" id="IPR036397">
    <property type="entry name" value="RNaseH_sf"/>
</dbReference>
<dbReference type="NCBIfam" id="NF000594">
    <property type="entry name" value="PRK00015.1-1"/>
    <property type="match status" value="1"/>
</dbReference>
<dbReference type="NCBIfam" id="NF000595">
    <property type="entry name" value="PRK00015.1-3"/>
    <property type="match status" value="1"/>
</dbReference>
<dbReference type="NCBIfam" id="NF000596">
    <property type="entry name" value="PRK00015.1-4"/>
    <property type="match status" value="1"/>
</dbReference>
<dbReference type="PANTHER" id="PTHR10954">
    <property type="entry name" value="RIBONUCLEASE H2 SUBUNIT A"/>
    <property type="match status" value="1"/>
</dbReference>
<dbReference type="PANTHER" id="PTHR10954:SF18">
    <property type="entry name" value="RIBONUCLEASE HII"/>
    <property type="match status" value="1"/>
</dbReference>
<dbReference type="Pfam" id="PF01351">
    <property type="entry name" value="RNase_HII"/>
    <property type="match status" value="1"/>
</dbReference>
<dbReference type="SUPFAM" id="SSF53098">
    <property type="entry name" value="Ribonuclease H-like"/>
    <property type="match status" value="1"/>
</dbReference>
<dbReference type="PROSITE" id="PS51975">
    <property type="entry name" value="RNASE_H_2"/>
    <property type="match status" value="1"/>
</dbReference>
<comment type="function">
    <text evidence="1">Endonuclease that specifically degrades the RNA of RNA-DNA hybrids.</text>
</comment>
<comment type="catalytic activity">
    <reaction evidence="1">
        <text>Endonucleolytic cleavage to 5'-phosphomonoester.</text>
        <dbReference type="EC" id="3.1.26.4"/>
    </reaction>
</comment>
<comment type="cofactor">
    <cofactor evidence="1">
        <name>Mn(2+)</name>
        <dbReference type="ChEBI" id="CHEBI:29035"/>
    </cofactor>
    <cofactor evidence="1">
        <name>Mg(2+)</name>
        <dbReference type="ChEBI" id="CHEBI:18420"/>
    </cofactor>
    <text evidence="1">Manganese or magnesium. Binds 1 divalent metal ion per monomer in the absence of substrate. May bind a second metal ion after substrate binding.</text>
</comment>
<comment type="subcellular location">
    <subcellularLocation>
        <location evidence="1">Cytoplasm</location>
    </subcellularLocation>
</comment>
<comment type="similarity">
    <text evidence="1">Belongs to the RNase HII family.</text>
</comment>
<accession>Q1CFG1</accession>
<accession>C4GWW8</accession>
<sequence length="198" mass="21648">MSETFIYPQANLIAGVDEVGRGPLVGAVVTAAVILDPNRPIVGLADSKKLSEKRRLSLYDEITEKALSWSLGRAEPEEIDQLNILHATMLAMQRAVSGLHIVPDYVLIDGNRCPKLQMPSLAVVKGDSRVAEISAASILAKVTRDREMTELDLLFPEYGFAQHKGYPTAFHLEKLAALGATVHHRRSFGPVKRVLGLV</sequence>
<protein>
    <recommendedName>
        <fullName evidence="1">Ribonuclease HII</fullName>
        <shortName evidence="1">RNase HII</shortName>
        <ecNumber evidence="1">3.1.26.4</ecNumber>
    </recommendedName>
</protein>
<reference key="1">
    <citation type="journal article" date="2006" name="J. Bacteriol.">
        <title>Complete genome sequence of Yersinia pestis strains Antiqua and Nepal516: evidence of gene reduction in an emerging pathogen.</title>
        <authorList>
            <person name="Chain P.S.G."/>
            <person name="Hu P."/>
            <person name="Malfatti S.A."/>
            <person name="Radnedge L."/>
            <person name="Larimer F."/>
            <person name="Vergez L.M."/>
            <person name="Worsham P."/>
            <person name="Chu M.C."/>
            <person name="Andersen G.L."/>
        </authorList>
    </citation>
    <scope>NUCLEOTIDE SEQUENCE [LARGE SCALE GENOMIC DNA]</scope>
    <source>
        <strain>Nepal516</strain>
    </source>
</reference>
<reference key="2">
    <citation type="submission" date="2009-04" db="EMBL/GenBank/DDBJ databases">
        <title>Yersinia pestis Nepal516A whole genome shotgun sequencing project.</title>
        <authorList>
            <person name="Plunkett G. III"/>
            <person name="Anderson B.D."/>
            <person name="Baumler D.J."/>
            <person name="Burland V."/>
            <person name="Cabot E.L."/>
            <person name="Glasner J.D."/>
            <person name="Mau B."/>
            <person name="Neeno-Eckwall E."/>
            <person name="Perna N.T."/>
            <person name="Munk A.C."/>
            <person name="Tapia R."/>
            <person name="Green L.D."/>
            <person name="Rogers Y.C."/>
            <person name="Detter J.C."/>
            <person name="Bruce D.C."/>
            <person name="Brettin T.S."/>
        </authorList>
    </citation>
    <scope>NUCLEOTIDE SEQUENCE [LARGE SCALE GENOMIC DNA]</scope>
    <source>
        <strain>Nepal516</strain>
    </source>
</reference>